<sequence>MDYSDPAELRESYDGAPLDPRGLAPQPMDQFHAWFTEACEAELSEPNAMVLSTVDPDGAPSARTVLLKGYDRRGLRFFTNYRSRKGVALAREPRACVVFPWHAIRRQVIVYGFAERLSDEENDAYFAQRPHGSQLGAWASEYQSAPVADRAELDRAYARCAEQWPPGTPVPRPEYWGGFLLVPQEVEFWQGRSDRMHDRFRYRLVSGTPSEGAWQIDRLSP</sequence>
<reference key="1">
    <citation type="journal article" date="2007" name="J. Bacteriol.">
        <title>Genome sequence and analysis of the soil cellulolytic actinomycete Thermobifida fusca YX.</title>
        <authorList>
            <person name="Lykidis A."/>
            <person name="Mavromatis K."/>
            <person name="Ivanova N."/>
            <person name="Anderson I."/>
            <person name="Land M."/>
            <person name="DiBartolo G."/>
            <person name="Martinez M."/>
            <person name="Lapidus A."/>
            <person name="Lucas S."/>
            <person name="Copeland A."/>
            <person name="Richardson P."/>
            <person name="Wilson D.B."/>
            <person name="Kyrpides N."/>
        </authorList>
    </citation>
    <scope>NUCLEOTIDE SEQUENCE [LARGE SCALE GENOMIC DNA]</scope>
    <source>
        <strain>YX</strain>
    </source>
</reference>
<proteinExistence type="inferred from homology"/>
<feature type="chain" id="PRO_0000167764" description="Pyridoxine/pyridoxamine 5'-phosphate oxidase">
    <location>
        <begin position="1"/>
        <end position="221"/>
    </location>
</feature>
<feature type="region of interest" description="Disordered" evidence="2">
    <location>
        <begin position="1"/>
        <end position="21"/>
    </location>
</feature>
<feature type="binding site" evidence="1">
    <location>
        <begin position="10"/>
        <end position="13"/>
    </location>
    <ligand>
        <name>substrate</name>
    </ligand>
</feature>
<feature type="binding site" evidence="1">
    <location>
        <begin position="63"/>
        <end position="68"/>
    </location>
    <ligand>
        <name>FMN</name>
        <dbReference type="ChEBI" id="CHEBI:58210"/>
    </ligand>
</feature>
<feature type="binding site" evidence="1">
    <location>
        <position position="68"/>
    </location>
    <ligand>
        <name>substrate</name>
    </ligand>
</feature>
<feature type="binding site" evidence="1">
    <location>
        <begin position="78"/>
        <end position="79"/>
    </location>
    <ligand>
        <name>FMN</name>
        <dbReference type="ChEBI" id="CHEBI:58210"/>
    </ligand>
</feature>
<feature type="binding site" evidence="1">
    <location>
        <position position="84"/>
    </location>
    <ligand>
        <name>FMN</name>
        <dbReference type="ChEBI" id="CHEBI:58210"/>
    </ligand>
</feature>
<feature type="binding site" evidence="1">
    <location>
        <position position="85"/>
    </location>
    <ligand>
        <name>FMN</name>
        <dbReference type="ChEBI" id="CHEBI:58210"/>
    </ligand>
</feature>
<feature type="binding site" evidence="1">
    <location>
        <position position="107"/>
    </location>
    <ligand>
        <name>FMN</name>
        <dbReference type="ChEBI" id="CHEBI:58210"/>
    </ligand>
</feature>
<feature type="binding site" evidence="1">
    <location>
        <position position="125"/>
    </location>
    <ligand>
        <name>substrate</name>
    </ligand>
</feature>
<feature type="binding site" evidence="1">
    <location>
        <position position="129"/>
    </location>
    <ligand>
        <name>substrate</name>
    </ligand>
</feature>
<feature type="binding site" evidence="1">
    <location>
        <position position="133"/>
    </location>
    <ligand>
        <name>substrate</name>
    </ligand>
</feature>
<feature type="binding site" evidence="1">
    <location>
        <begin position="143"/>
        <end position="144"/>
    </location>
    <ligand>
        <name>FMN</name>
        <dbReference type="ChEBI" id="CHEBI:58210"/>
    </ligand>
</feature>
<feature type="binding site" evidence="1">
    <location>
        <position position="189"/>
    </location>
    <ligand>
        <name>FMN</name>
        <dbReference type="ChEBI" id="CHEBI:58210"/>
    </ligand>
</feature>
<feature type="binding site" evidence="1">
    <location>
        <begin position="195"/>
        <end position="197"/>
    </location>
    <ligand>
        <name>substrate</name>
    </ligand>
</feature>
<feature type="binding site" evidence="1">
    <location>
        <position position="199"/>
    </location>
    <ligand>
        <name>FMN</name>
        <dbReference type="ChEBI" id="CHEBI:58210"/>
    </ligand>
</feature>
<name>PDXH_THEFY</name>
<evidence type="ECO:0000255" key="1">
    <source>
        <dbReference type="HAMAP-Rule" id="MF_01629"/>
    </source>
</evidence>
<evidence type="ECO:0000256" key="2">
    <source>
        <dbReference type="SAM" id="MobiDB-lite"/>
    </source>
</evidence>
<protein>
    <recommendedName>
        <fullName evidence="1">Pyridoxine/pyridoxamine 5'-phosphate oxidase</fullName>
        <ecNumber evidence="1">1.4.3.5</ecNumber>
    </recommendedName>
    <alternativeName>
        <fullName evidence="1">PNP/PMP oxidase</fullName>
        <shortName evidence="1">PNPOx</shortName>
    </alternativeName>
    <alternativeName>
        <fullName evidence="1">Pyridoxal 5'-phosphate synthase</fullName>
    </alternativeName>
</protein>
<comment type="function">
    <text evidence="1">Catalyzes the oxidation of either pyridoxine 5'-phosphate (PNP) or pyridoxamine 5'-phosphate (PMP) into pyridoxal 5'-phosphate (PLP).</text>
</comment>
<comment type="catalytic activity">
    <reaction evidence="1">
        <text>pyridoxamine 5'-phosphate + O2 + H2O = pyridoxal 5'-phosphate + H2O2 + NH4(+)</text>
        <dbReference type="Rhea" id="RHEA:15817"/>
        <dbReference type="ChEBI" id="CHEBI:15377"/>
        <dbReference type="ChEBI" id="CHEBI:15379"/>
        <dbReference type="ChEBI" id="CHEBI:16240"/>
        <dbReference type="ChEBI" id="CHEBI:28938"/>
        <dbReference type="ChEBI" id="CHEBI:58451"/>
        <dbReference type="ChEBI" id="CHEBI:597326"/>
        <dbReference type="EC" id="1.4.3.5"/>
    </reaction>
</comment>
<comment type="catalytic activity">
    <reaction evidence="1">
        <text>pyridoxine 5'-phosphate + O2 = pyridoxal 5'-phosphate + H2O2</text>
        <dbReference type="Rhea" id="RHEA:15149"/>
        <dbReference type="ChEBI" id="CHEBI:15379"/>
        <dbReference type="ChEBI" id="CHEBI:16240"/>
        <dbReference type="ChEBI" id="CHEBI:58589"/>
        <dbReference type="ChEBI" id="CHEBI:597326"/>
        <dbReference type="EC" id="1.4.3.5"/>
    </reaction>
</comment>
<comment type="cofactor">
    <cofactor evidence="1">
        <name>FMN</name>
        <dbReference type="ChEBI" id="CHEBI:58210"/>
    </cofactor>
    <text evidence="1">Binds 1 FMN per subunit.</text>
</comment>
<comment type="pathway">
    <text evidence="1">Cofactor metabolism; pyridoxal 5'-phosphate salvage; pyridoxal 5'-phosphate from pyridoxamine 5'-phosphate: step 1/1.</text>
</comment>
<comment type="pathway">
    <text evidence="1">Cofactor metabolism; pyridoxal 5'-phosphate salvage; pyridoxal 5'-phosphate from pyridoxine 5'-phosphate: step 1/1.</text>
</comment>
<comment type="subunit">
    <text evidence="1">Homodimer.</text>
</comment>
<comment type="similarity">
    <text evidence="1">Belongs to the pyridoxamine 5'-phosphate oxidase family.</text>
</comment>
<gene>
    <name evidence="1" type="primary">pdxH</name>
    <name type="ordered locus">Tfu_0248</name>
</gene>
<dbReference type="EC" id="1.4.3.5" evidence="1"/>
<dbReference type="EMBL" id="CP000088">
    <property type="protein sequence ID" value="AAZ54286.1"/>
    <property type="molecule type" value="Genomic_DNA"/>
</dbReference>
<dbReference type="RefSeq" id="WP_011290695.1">
    <property type="nucleotide sequence ID" value="NC_007333.1"/>
</dbReference>
<dbReference type="SMR" id="Q47TD1"/>
<dbReference type="STRING" id="269800.Tfu_0248"/>
<dbReference type="KEGG" id="tfu:Tfu_0248"/>
<dbReference type="eggNOG" id="COG0259">
    <property type="taxonomic scope" value="Bacteria"/>
</dbReference>
<dbReference type="HOGENOM" id="CLU_032263_2_2_11"/>
<dbReference type="OrthoDB" id="9780392at2"/>
<dbReference type="UniPathway" id="UPA01068">
    <property type="reaction ID" value="UER00304"/>
</dbReference>
<dbReference type="UniPathway" id="UPA01068">
    <property type="reaction ID" value="UER00305"/>
</dbReference>
<dbReference type="GO" id="GO:0010181">
    <property type="term" value="F:FMN binding"/>
    <property type="evidence" value="ECO:0007669"/>
    <property type="project" value="UniProtKB-UniRule"/>
</dbReference>
<dbReference type="GO" id="GO:0004733">
    <property type="term" value="F:pyridoxamine phosphate oxidase activity"/>
    <property type="evidence" value="ECO:0007669"/>
    <property type="project" value="UniProtKB-UniRule"/>
</dbReference>
<dbReference type="GO" id="GO:0008615">
    <property type="term" value="P:pyridoxine biosynthetic process"/>
    <property type="evidence" value="ECO:0007669"/>
    <property type="project" value="UniProtKB-KW"/>
</dbReference>
<dbReference type="Gene3D" id="2.30.110.10">
    <property type="entry name" value="Electron Transport, Fmn-binding Protein, Chain A"/>
    <property type="match status" value="1"/>
</dbReference>
<dbReference type="HAMAP" id="MF_01629">
    <property type="entry name" value="PdxH"/>
    <property type="match status" value="1"/>
</dbReference>
<dbReference type="InterPro" id="IPR000659">
    <property type="entry name" value="Pyridox_Oxase"/>
</dbReference>
<dbReference type="InterPro" id="IPR019740">
    <property type="entry name" value="Pyridox_Oxase_CS"/>
</dbReference>
<dbReference type="InterPro" id="IPR011576">
    <property type="entry name" value="Pyridox_Oxase_N"/>
</dbReference>
<dbReference type="InterPro" id="IPR019576">
    <property type="entry name" value="Pyridoxamine_oxidase_dimer_C"/>
</dbReference>
<dbReference type="InterPro" id="IPR012349">
    <property type="entry name" value="Split_barrel_FMN-bd"/>
</dbReference>
<dbReference type="NCBIfam" id="TIGR00558">
    <property type="entry name" value="pdxH"/>
    <property type="match status" value="1"/>
</dbReference>
<dbReference type="NCBIfam" id="NF004231">
    <property type="entry name" value="PRK05679.1"/>
    <property type="match status" value="1"/>
</dbReference>
<dbReference type="PANTHER" id="PTHR10851:SF0">
    <property type="entry name" value="PYRIDOXINE-5'-PHOSPHATE OXIDASE"/>
    <property type="match status" value="1"/>
</dbReference>
<dbReference type="PANTHER" id="PTHR10851">
    <property type="entry name" value="PYRIDOXINE-5-PHOSPHATE OXIDASE"/>
    <property type="match status" value="1"/>
</dbReference>
<dbReference type="Pfam" id="PF10590">
    <property type="entry name" value="PNP_phzG_C"/>
    <property type="match status" value="1"/>
</dbReference>
<dbReference type="Pfam" id="PF01243">
    <property type="entry name" value="PNPOx_N"/>
    <property type="match status" value="1"/>
</dbReference>
<dbReference type="PIRSF" id="PIRSF000190">
    <property type="entry name" value="Pyd_amn-ph_oxd"/>
    <property type="match status" value="1"/>
</dbReference>
<dbReference type="SUPFAM" id="SSF50475">
    <property type="entry name" value="FMN-binding split barrel"/>
    <property type="match status" value="1"/>
</dbReference>
<dbReference type="PROSITE" id="PS01064">
    <property type="entry name" value="PYRIDOX_OXIDASE"/>
    <property type="match status" value="1"/>
</dbReference>
<organism>
    <name type="scientific">Thermobifida fusca (strain YX)</name>
    <dbReference type="NCBI Taxonomy" id="269800"/>
    <lineage>
        <taxon>Bacteria</taxon>
        <taxon>Bacillati</taxon>
        <taxon>Actinomycetota</taxon>
        <taxon>Actinomycetes</taxon>
        <taxon>Streptosporangiales</taxon>
        <taxon>Nocardiopsidaceae</taxon>
        <taxon>Thermobifida</taxon>
    </lineage>
</organism>
<accession>Q47TD1</accession>
<keyword id="KW-0285">Flavoprotein</keyword>
<keyword id="KW-0288">FMN</keyword>
<keyword id="KW-0560">Oxidoreductase</keyword>
<keyword id="KW-0664">Pyridoxine biosynthesis</keyword>